<protein>
    <recommendedName>
        <fullName evidence="7">Cyclin-dependent kinase 2 homolog</fullName>
        <ecNumber evidence="3">2.7.11.22</ecNumber>
        <ecNumber evidence="3">2.7.11.23</ecNumber>
    </recommendedName>
    <alternativeName>
        <fullName evidence="3">Cell division control protein 2 homolog</fullName>
    </alternativeName>
    <alternativeName>
        <fullName evidence="4">cdc2-related kinase 2</fullName>
    </alternativeName>
</protein>
<proteinExistence type="inferred from homology"/>
<gene>
    <name evidence="4" type="primary">CRK2</name>
    <name type="ORF">PY02339</name>
</gene>
<organism>
    <name type="scientific">Plasmodium yoelii yoelii</name>
    <dbReference type="NCBI Taxonomy" id="73239"/>
    <lineage>
        <taxon>Eukaryota</taxon>
        <taxon>Sar</taxon>
        <taxon>Alveolata</taxon>
        <taxon>Apicomplexa</taxon>
        <taxon>Aconoidasida</taxon>
        <taxon>Haemosporida</taxon>
        <taxon>Plasmodiidae</taxon>
        <taxon>Plasmodium</taxon>
        <taxon>Plasmodium (Vinckeia)</taxon>
    </lineage>
</organism>
<feature type="chain" id="PRO_0000232672" description="Cyclin-dependent kinase 2 homolog">
    <location>
        <begin position="1"/>
        <end position="289"/>
    </location>
</feature>
<feature type="domain" description="Protein kinase" evidence="5">
    <location>
        <begin position="4"/>
        <end position="285"/>
    </location>
</feature>
<feature type="active site" description="Proton acceptor" evidence="5 6">
    <location>
        <position position="126"/>
    </location>
</feature>
<feature type="binding site" evidence="5">
    <location>
        <begin position="10"/>
        <end position="18"/>
    </location>
    <ligand>
        <name>ATP</name>
        <dbReference type="ChEBI" id="CHEBI:30616"/>
    </ligand>
</feature>
<feature type="binding site" evidence="5">
    <location>
        <position position="32"/>
    </location>
    <ligand>
        <name>ATP</name>
        <dbReference type="ChEBI" id="CHEBI:30616"/>
    </ligand>
</feature>
<feature type="modified residue" description="Phosphothreonine" evidence="2">
    <location>
        <position position="14"/>
    </location>
</feature>
<feature type="modified residue" description="Phosphotyrosine" evidence="2">
    <location>
        <position position="15"/>
    </location>
</feature>
<feature type="modified residue" description="Phosphothreonine" evidence="2">
    <location>
        <position position="159"/>
    </location>
</feature>
<name>CDK2H_PLAYO</name>
<accession>Q7RM49</accession>
<keyword id="KW-0067">ATP-binding</keyword>
<keyword id="KW-0131">Cell cycle</keyword>
<keyword id="KW-0132">Cell division</keyword>
<keyword id="KW-0963">Cytoplasm</keyword>
<keyword id="KW-0418">Kinase</keyword>
<keyword id="KW-0460">Magnesium</keyword>
<keyword id="KW-0479">Metal-binding</keyword>
<keyword id="KW-0498">Mitosis</keyword>
<keyword id="KW-0547">Nucleotide-binding</keyword>
<keyword id="KW-0597">Phosphoprotein</keyword>
<keyword id="KW-1185">Reference proteome</keyword>
<keyword id="KW-0723">Serine/threonine-protein kinase</keyword>
<keyword id="KW-0808">Transferase</keyword>
<reference key="1">
    <citation type="journal article" date="2002" name="Nature">
        <title>Genome sequence and comparative analysis of the model rodent malaria parasite Plasmodium yoelii yoelii.</title>
        <authorList>
            <person name="Carlton J.M."/>
            <person name="Angiuoli S.V."/>
            <person name="Suh B.B."/>
            <person name="Kooij T.W."/>
            <person name="Pertea M."/>
            <person name="Silva J.C."/>
            <person name="Ermolaeva M.D."/>
            <person name="Allen J.E."/>
            <person name="Selengut J.D."/>
            <person name="Koo H.L."/>
            <person name="Peterson J.D."/>
            <person name="Pop M."/>
            <person name="Kosack D.S."/>
            <person name="Shumway M.F."/>
            <person name="Bidwell S.L."/>
            <person name="Shallom S.J."/>
            <person name="van Aken S.E."/>
            <person name="Riedmuller S.B."/>
            <person name="Feldblyum T.V."/>
            <person name="Cho J.K."/>
            <person name="Quackenbush J."/>
            <person name="Sedegah M."/>
            <person name="Shoaibi A."/>
            <person name="Cummings L.M."/>
            <person name="Florens L."/>
            <person name="Yates J.R. III"/>
            <person name="Raine J.D."/>
            <person name="Sinden R.E."/>
            <person name="Harris M.A."/>
            <person name="Cunningham D.A."/>
            <person name="Preiser P.R."/>
            <person name="Bergman L.W."/>
            <person name="Vaidya A.B."/>
            <person name="van Lin L.H."/>
            <person name="Janse C.J."/>
            <person name="Waters A.P."/>
            <person name="Smith H.O."/>
            <person name="White O.R."/>
            <person name="Salzberg S.L."/>
            <person name="Venter J.C."/>
            <person name="Fraser C.M."/>
            <person name="Hoffman S.L."/>
            <person name="Gardner M.J."/>
            <person name="Carucci D.J."/>
        </authorList>
    </citation>
    <scope>NUCLEOTIDE SEQUENCE [LARGE SCALE GENOMIC DNA]</scope>
    <source>
        <strain>17XNL</strain>
    </source>
</reference>
<sequence>MEKYHGLEKIGEGTYGVVYKAQNSDGESFALKKIRLEKEDEGIPSTVSIREISILKELRHSNIVKLYDVIHAKKRLILVFEHLDQDLKKLIDVCDGGLESVTAKSFLLQLLNGIAYCHEHRVLHRDLKPQNLLINREGELKIADFGLARAFGIPARRYTHEVVTLWYRAPDILMGSKKYSTPIDIWSVGCIFAEMVNGRPLFPGVSETDQLMRIFKILGTPNSQNWPDVFKLPKYDPNFPVYEPLPWETFIKGLDDTGIDLLSKMLKLDPNQRITAKQAIEHPYFKETN</sequence>
<dbReference type="EC" id="2.7.11.22" evidence="3"/>
<dbReference type="EC" id="2.7.11.23" evidence="3"/>
<dbReference type="EMBL" id="AABL01000639">
    <property type="protein sequence ID" value="EAA21777.1"/>
    <property type="molecule type" value="Genomic_DNA"/>
</dbReference>
<dbReference type="SMR" id="Q7RM49"/>
<dbReference type="FunCoup" id="Q7RM49">
    <property type="interactions" value="266"/>
</dbReference>
<dbReference type="STRING" id="73239.Q7RM49"/>
<dbReference type="PaxDb" id="73239-Q7RM49"/>
<dbReference type="EnsemblProtists" id="EAA21777">
    <property type="protein sequence ID" value="EAA21777"/>
    <property type="gene ID" value="EAA21777"/>
</dbReference>
<dbReference type="InParanoid" id="Q7RM49"/>
<dbReference type="Proteomes" id="UP000008553">
    <property type="component" value="Unassembled WGS sequence"/>
</dbReference>
<dbReference type="GO" id="GO:0005737">
    <property type="term" value="C:cytoplasm"/>
    <property type="evidence" value="ECO:0007669"/>
    <property type="project" value="UniProtKB-SubCell"/>
</dbReference>
<dbReference type="GO" id="GO:0005634">
    <property type="term" value="C:nucleus"/>
    <property type="evidence" value="ECO:0007669"/>
    <property type="project" value="TreeGrafter"/>
</dbReference>
<dbReference type="GO" id="GO:0005524">
    <property type="term" value="F:ATP binding"/>
    <property type="evidence" value="ECO:0007669"/>
    <property type="project" value="UniProtKB-KW"/>
</dbReference>
<dbReference type="GO" id="GO:0004693">
    <property type="term" value="F:cyclin-dependent protein serine/threonine kinase activity"/>
    <property type="evidence" value="ECO:0007669"/>
    <property type="project" value="UniProtKB-EC"/>
</dbReference>
<dbReference type="GO" id="GO:0046872">
    <property type="term" value="F:metal ion binding"/>
    <property type="evidence" value="ECO:0007669"/>
    <property type="project" value="UniProtKB-KW"/>
</dbReference>
<dbReference type="GO" id="GO:0106310">
    <property type="term" value="F:protein serine kinase activity"/>
    <property type="evidence" value="ECO:0007669"/>
    <property type="project" value="RHEA"/>
</dbReference>
<dbReference type="GO" id="GO:0008353">
    <property type="term" value="F:RNA polymerase II CTD heptapeptide repeat kinase activity"/>
    <property type="evidence" value="ECO:0007669"/>
    <property type="project" value="UniProtKB-EC"/>
</dbReference>
<dbReference type="GO" id="GO:0051301">
    <property type="term" value="P:cell division"/>
    <property type="evidence" value="ECO:0007669"/>
    <property type="project" value="UniProtKB-KW"/>
</dbReference>
<dbReference type="CDD" id="cd07829">
    <property type="entry name" value="STKc_CDK_like"/>
    <property type="match status" value="1"/>
</dbReference>
<dbReference type="FunFam" id="3.30.200.20:FF:000396">
    <property type="entry name" value="Cdc2-related kinase 2, putative"/>
    <property type="match status" value="1"/>
</dbReference>
<dbReference type="FunFam" id="1.10.510.10:FF:000184">
    <property type="entry name" value="cyclin-dependent kinase 5 homolog"/>
    <property type="match status" value="1"/>
</dbReference>
<dbReference type="Gene3D" id="3.30.200.20">
    <property type="entry name" value="Phosphorylase Kinase, domain 1"/>
    <property type="match status" value="1"/>
</dbReference>
<dbReference type="Gene3D" id="1.10.510.10">
    <property type="entry name" value="Transferase(Phosphotransferase) domain 1"/>
    <property type="match status" value="1"/>
</dbReference>
<dbReference type="InterPro" id="IPR050108">
    <property type="entry name" value="CDK"/>
</dbReference>
<dbReference type="InterPro" id="IPR011009">
    <property type="entry name" value="Kinase-like_dom_sf"/>
</dbReference>
<dbReference type="InterPro" id="IPR000719">
    <property type="entry name" value="Prot_kinase_dom"/>
</dbReference>
<dbReference type="InterPro" id="IPR017441">
    <property type="entry name" value="Protein_kinase_ATP_BS"/>
</dbReference>
<dbReference type="InterPro" id="IPR008271">
    <property type="entry name" value="Ser/Thr_kinase_AS"/>
</dbReference>
<dbReference type="PANTHER" id="PTHR24056">
    <property type="entry name" value="CELL DIVISION PROTEIN KINASE"/>
    <property type="match status" value="1"/>
</dbReference>
<dbReference type="PANTHER" id="PTHR24056:SF46">
    <property type="entry name" value="CYCLIN-DEPENDENT KINASE 5"/>
    <property type="match status" value="1"/>
</dbReference>
<dbReference type="Pfam" id="PF00069">
    <property type="entry name" value="Pkinase"/>
    <property type="match status" value="1"/>
</dbReference>
<dbReference type="SMART" id="SM00220">
    <property type="entry name" value="S_TKc"/>
    <property type="match status" value="1"/>
</dbReference>
<dbReference type="SUPFAM" id="SSF56112">
    <property type="entry name" value="Protein kinase-like (PK-like)"/>
    <property type="match status" value="1"/>
</dbReference>
<dbReference type="PROSITE" id="PS00107">
    <property type="entry name" value="PROTEIN_KINASE_ATP"/>
    <property type="match status" value="1"/>
</dbReference>
<dbReference type="PROSITE" id="PS50011">
    <property type="entry name" value="PROTEIN_KINASE_DOM"/>
    <property type="match status" value="1"/>
</dbReference>
<dbReference type="PROSITE" id="PS00108">
    <property type="entry name" value="PROTEIN_KINASE_ST"/>
    <property type="match status" value="1"/>
</dbReference>
<comment type="function">
    <text evidence="1 3">Serine/threonine-protein kinase (By similarity). Involved in the control of the cell cycle. Required for entry into S-phase and mitosis (By similarity). Probable component of the kinase complex that phosphorylates the repetitive C-terminus of RNA polymerase II (By similarity).</text>
</comment>
<comment type="catalytic activity">
    <reaction evidence="3">
        <text>L-seryl-[protein] + ATP = O-phospho-L-seryl-[protein] + ADP + H(+)</text>
        <dbReference type="Rhea" id="RHEA:17989"/>
        <dbReference type="Rhea" id="RHEA-COMP:9863"/>
        <dbReference type="Rhea" id="RHEA-COMP:11604"/>
        <dbReference type="ChEBI" id="CHEBI:15378"/>
        <dbReference type="ChEBI" id="CHEBI:29999"/>
        <dbReference type="ChEBI" id="CHEBI:30616"/>
        <dbReference type="ChEBI" id="CHEBI:83421"/>
        <dbReference type="ChEBI" id="CHEBI:456216"/>
        <dbReference type="EC" id="2.7.11.22"/>
    </reaction>
</comment>
<comment type="catalytic activity">
    <reaction evidence="3">
        <text>L-threonyl-[protein] + ATP = O-phospho-L-threonyl-[protein] + ADP + H(+)</text>
        <dbReference type="Rhea" id="RHEA:46608"/>
        <dbReference type="Rhea" id="RHEA-COMP:11060"/>
        <dbReference type="Rhea" id="RHEA-COMP:11605"/>
        <dbReference type="ChEBI" id="CHEBI:15378"/>
        <dbReference type="ChEBI" id="CHEBI:30013"/>
        <dbReference type="ChEBI" id="CHEBI:30616"/>
        <dbReference type="ChEBI" id="CHEBI:61977"/>
        <dbReference type="ChEBI" id="CHEBI:456216"/>
        <dbReference type="EC" id="2.7.11.22"/>
    </reaction>
</comment>
<comment type="catalytic activity">
    <reaction evidence="3">
        <text>[DNA-directed RNA polymerase] + ATP = phospho-[DNA-directed RNA polymerase] + ADP + H(+)</text>
        <dbReference type="Rhea" id="RHEA:10216"/>
        <dbReference type="Rhea" id="RHEA-COMP:11321"/>
        <dbReference type="Rhea" id="RHEA-COMP:11322"/>
        <dbReference type="ChEBI" id="CHEBI:15378"/>
        <dbReference type="ChEBI" id="CHEBI:30616"/>
        <dbReference type="ChEBI" id="CHEBI:43176"/>
        <dbReference type="ChEBI" id="CHEBI:68546"/>
        <dbReference type="ChEBI" id="CHEBI:456216"/>
        <dbReference type="EC" id="2.7.11.23"/>
    </reaction>
</comment>
<comment type="cofactor">
    <cofactor evidence="3">
        <name>Mg(2+)</name>
        <dbReference type="ChEBI" id="CHEBI:18420"/>
    </cofactor>
</comment>
<comment type="activity regulation">
    <text evidence="2">Phosphorylation at Thr-14 or Tyr-15 inactivates the enzyme, while phosphorylation at Thr-159 activates it.</text>
</comment>
<comment type="subunit">
    <text evidence="3">May form a complex composed of at least the catalytic subunit CRK2 and a cyclin.</text>
</comment>
<comment type="subcellular location">
    <subcellularLocation>
        <location evidence="1">Cytoplasm</location>
    </subcellularLocation>
</comment>
<comment type="similarity">
    <text evidence="7">Belongs to the protein kinase superfamily. CMGC Ser/Thr protein kinase family. CDC2/CDKX subfamily.</text>
</comment>
<evidence type="ECO:0000250" key="1">
    <source>
        <dbReference type="UniProtKB" id="P04551"/>
    </source>
</evidence>
<evidence type="ECO:0000250" key="2">
    <source>
        <dbReference type="UniProtKB" id="P24941"/>
    </source>
</evidence>
<evidence type="ECO:0000250" key="3">
    <source>
        <dbReference type="UniProtKB" id="P61075"/>
    </source>
</evidence>
<evidence type="ECO:0000250" key="4">
    <source>
        <dbReference type="UniProtKB" id="Q4Z6R1"/>
    </source>
</evidence>
<evidence type="ECO:0000255" key="5">
    <source>
        <dbReference type="PROSITE-ProRule" id="PRU00159"/>
    </source>
</evidence>
<evidence type="ECO:0000255" key="6">
    <source>
        <dbReference type="PROSITE-ProRule" id="PRU10027"/>
    </source>
</evidence>
<evidence type="ECO:0000305" key="7"/>